<sequence length="952" mass="106083">MSRLIVKNLPNGMKEERFRQLFAAFGTLTDCSLKFTKDGKFRKFGFIGFKSEEEAQAALNHFHRSFIDTTRITVEFCKSFGDPSKPRAWSKHAQKSSQPKQPSQDSVPSDTKKDKKKKGPSDLEKLKEDAKFQEFLSIHQKRTQVATWANDALEAKLPKAKTKASSDYLNFDSDSNSDSGQESEEEPAREDPEEEQGLQPKAAVQKELSDMDYLKSKMVRAEVSSEDEDEEDSEDEAVNCEEGSEEEEEEGSPASPAKQGGVSRGAVPGVLRPQEAAGKVEKPVSQKEPTTPYTVKLRGAPFNVTEKNVIEFLAPLKPVAIRIVRNAHGNKTGYVFVDLSSEEEVKKALKCNRDYMGGRYIEVFREKQAPTARGPPKSTTPWQGRTLGENEEEEDLADSGRLFVRNLSYTSSEEDLEKLFSAYGPLSELHYPIDSLTKKPKGFAFVTFMFPEHAVKAYAEVDGQVFQGRMLHVLPSTIKKEASQEANAPGSSYKKKKEAMDKANSSSSHNWNTLFMGPNAVADAIAQKYNATKSQVFDHETRGSVAVRVALGETQLVQEVRSFLIDNGVCLDSFSQAAAERSKTVILAKNLPAGTLAAEIQETFSRFGSLGRVLLPEGGITAIVEFLEPLEARKAFRHLAYSKFHHVPLYLEWAPIGVFGAAPQKKDSQHEQPAEKAEVEQETVLDPEGEKASVEGAEASTGKMEEEEEEEEEEEEESIPGCTLFIKNLNFSTTEETLKGVFSKVGAIKSCTISKKKNKAGVLLSMGFGFVEYKKPEQAQKALKQLQGHTVDGHKLEVRISERATKPALTSTRKKQVPKKQTTSKILVRNIPFQANQREIRELFSTFGELKTVRLPKKMTGTGAHRGFGFVDFITKQDAKKAFNALCHSTHLYGRRLVLEWADSEVTVQTLRRKTARHFQEPPKKKRSAVLDGILEQLEDEDNSDGEQALQL</sequence>
<gene>
    <name type="primary">Rbm19</name>
</gene>
<accession>Q8R3C6</accession>
<accession>Q8BHR0</accession>
<accession>Q9CW63</accession>
<evidence type="ECO:0000250" key="1"/>
<evidence type="ECO:0000250" key="2">
    <source>
        <dbReference type="UniProtKB" id="Q9Y4C8"/>
    </source>
</evidence>
<evidence type="ECO:0000255" key="3">
    <source>
        <dbReference type="PROSITE-ProRule" id="PRU00176"/>
    </source>
</evidence>
<evidence type="ECO:0000256" key="4">
    <source>
        <dbReference type="SAM" id="MobiDB-lite"/>
    </source>
</evidence>
<evidence type="ECO:0000269" key="5">
    <source>
    </source>
</evidence>
<evidence type="ECO:0000269" key="6">
    <source>
    </source>
</evidence>
<evidence type="ECO:0000303" key="7">
    <source>
    </source>
</evidence>
<evidence type="ECO:0000305" key="8"/>
<evidence type="ECO:0007744" key="9">
    <source>
    </source>
</evidence>
<evidence type="ECO:0007744" key="10">
    <source>
    </source>
</evidence>
<evidence type="ECO:0007829" key="11">
    <source>
        <dbReference type="PDB" id="1WHW"/>
    </source>
</evidence>
<evidence type="ECO:0007829" key="12">
    <source>
        <dbReference type="PDB" id="1WHX"/>
    </source>
</evidence>
<evidence type="ECO:0007829" key="13">
    <source>
        <dbReference type="PDB" id="2CPF"/>
    </source>
</evidence>
<evidence type="ECO:0007829" key="14">
    <source>
        <dbReference type="PDB" id="2CPH"/>
    </source>
</evidence>
<reference key="1">
    <citation type="journal article" date="2004" name="Genome Res.">
        <title>The status, quality, and expansion of the NIH full-length cDNA project: the Mammalian Gene Collection (MGC).</title>
        <authorList>
            <consortium name="The MGC Project Team"/>
        </authorList>
    </citation>
    <scope>NUCLEOTIDE SEQUENCE [LARGE SCALE MRNA] (ISOFORM 1)</scope>
    <source>
        <strain>FVB/N</strain>
        <tissue>Colon</tissue>
        <tissue>Mammary cancer</tissue>
    </source>
</reference>
<reference key="2">
    <citation type="journal article" date="2005" name="Science">
        <title>The transcriptional landscape of the mammalian genome.</title>
        <authorList>
            <person name="Carninci P."/>
            <person name="Kasukawa T."/>
            <person name="Katayama S."/>
            <person name="Gough J."/>
            <person name="Frith M.C."/>
            <person name="Maeda N."/>
            <person name="Oyama R."/>
            <person name="Ravasi T."/>
            <person name="Lenhard B."/>
            <person name="Wells C."/>
            <person name="Kodzius R."/>
            <person name="Shimokawa K."/>
            <person name="Bajic V.B."/>
            <person name="Brenner S.E."/>
            <person name="Batalov S."/>
            <person name="Forrest A.R."/>
            <person name="Zavolan M."/>
            <person name="Davis M.J."/>
            <person name="Wilming L.G."/>
            <person name="Aidinis V."/>
            <person name="Allen J.E."/>
            <person name="Ambesi-Impiombato A."/>
            <person name="Apweiler R."/>
            <person name="Aturaliya R.N."/>
            <person name="Bailey T.L."/>
            <person name="Bansal M."/>
            <person name="Baxter L."/>
            <person name="Beisel K.W."/>
            <person name="Bersano T."/>
            <person name="Bono H."/>
            <person name="Chalk A.M."/>
            <person name="Chiu K.P."/>
            <person name="Choudhary V."/>
            <person name="Christoffels A."/>
            <person name="Clutterbuck D.R."/>
            <person name="Crowe M.L."/>
            <person name="Dalla E."/>
            <person name="Dalrymple B.P."/>
            <person name="de Bono B."/>
            <person name="Della Gatta G."/>
            <person name="di Bernardo D."/>
            <person name="Down T."/>
            <person name="Engstrom P."/>
            <person name="Fagiolini M."/>
            <person name="Faulkner G."/>
            <person name="Fletcher C.F."/>
            <person name="Fukushima T."/>
            <person name="Furuno M."/>
            <person name="Futaki S."/>
            <person name="Gariboldi M."/>
            <person name="Georgii-Hemming P."/>
            <person name="Gingeras T.R."/>
            <person name="Gojobori T."/>
            <person name="Green R.E."/>
            <person name="Gustincich S."/>
            <person name="Harbers M."/>
            <person name="Hayashi Y."/>
            <person name="Hensch T.K."/>
            <person name="Hirokawa N."/>
            <person name="Hill D."/>
            <person name="Huminiecki L."/>
            <person name="Iacono M."/>
            <person name="Ikeo K."/>
            <person name="Iwama A."/>
            <person name="Ishikawa T."/>
            <person name="Jakt M."/>
            <person name="Kanapin A."/>
            <person name="Katoh M."/>
            <person name="Kawasawa Y."/>
            <person name="Kelso J."/>
            <person name="Kitamura H."/>
            <person name="Kitano H."/>
            <person name="Kollias G."/>
            <person name="Krishnan S.P."/>
            <person name="Kruger A."/>
            <person name="Kummerfeld S.K."/>
            <person name="Kurochkin I.V."/>
            <person name="Lareau L.F."/>
            <person name="Lazarevic D."/>
            <person name="Lipovich L."/>
            <person name="Liu J."/>
            <person name="Liuni S."/>
            <person name="McWilliam S."/>
            <person name="Madan Babu M."/>
            <person name="Madera M."/>
            <person name="Marchionni L."/>
            <person name="Matsuda H."/>
            <person name="Matsuzawa S."/>
            <person name="Miki H."/>
            <person name="Mignone F."/>
            <person name="Miyake S."/>
            <person name="Morris K."/>
            <person name="Mottagui-Tabar S."/>
            <person name="Mulder N."/>
            <person name="Nakano N."/>
            <person name="Nakauchi H."/>
            <person name="Ng P."/>
            <person name="Nilsson R."/>
            <person name="Nishiguchi S."/>
            <person name="Nishikawa S."/>
            <person name="Nori F."/>
            <person name="Ohara O."/>
            <person name="Okazaki Y."/>
            <person name="Orlando V."/>
            <person name="Pang K.C."/>
            <person name="Pavan W.J."/>
            <person name="Pavesi G."/>
            <person name="Pesole G."/>
            <person name="Petrovsky N."/>
            <person name="Piazza S."/>
            <person name="Reed J."/>
            <person name="Reid J.F."/>
            <person name="Ring B.Z."/>
            <person name="Ringwald M."/>
            <person name="Rost B."/>
            <person name="Ruan Y."/>
            <person name="Salzberg S.L."/>
            <person name="Sandelin A."/>
            <person name="Schneider C."/>
            <person name="Schoenbach C."/>
            <person name="Sekiguchi K."/>
            <person name="Semple C.A."/>
            <person name="Seno S."/>
            <person name="Sessa L."/>
            <person name="Sheng Y."/>
            <person name="Shibata Y."/>
            <person name="Shimada H."/>
            <person name="Shimada K."/>
            <person name="Silva D."/>
            <person name="Sinclair B."/>
            <person name="Sperling S."/>
            <person name="Stupka E."/>
            <person name="Sugiura K."/>
            <person name="Sultana R."/>
            <person name="Takenaka Y."/>
            <person name="Taki K."/>
            <person name="Tammoja K."/>
            <person name="Tan S.L."/>
            <person name="Tang S."/>
            <person name="Taylor M.S."/>
            <person name="Tegner J."/>
            <person name="Teichmann S.A."/>
            <person name="Ueda H.R."/>
            <person name="van Nimwegen E."/>
            <person name="Verardo R."/>
            <person name="Wei C.L."/>
            <person name="Yagi K."/>
            <person name="Yamanishi H."/>
            <person name="Zabarovsky E."/>
            <person name="Zhu S."/>
            <person name="Zimmer A."/>
            <person name="Hide W."/>
            <person name="Bult C."/>
            <person name="Grimmond S.M."/>
            <person name="Teasdale R.D."/>
            <person name="Liu E.T."/>
            <person name="Brusic V."/>
            <person name="Quackenbush J."/>
            <person name="Wahlestedt C."/>
            <person name="Mattick J.S."/>
            <person name="Hume D.A."/>
            <person name="Kai C."/>
            <person name="Sasaki D."/>
            <person name="Tomaru Y."/>
            <person name="Fukuda S."/>
            <person name="Kanamori-Katayama M."/>
            <person name="Suzuki M."/>
            <person name="Aoki J."/>
            <person name="Arakawa T."/>
            <person name="Iida J."/>
            <person name="Imamura K."/>
            <person name="Itoh M."/>
            <person name="Kato T."/>
            <person name="Kawaji H."/>
            <person name="Kawagashira N."/>
            <person name="Kawashima T."/>
            <person name="Kojima M."/>
            <person name="Kondo S."/>
            <person name="Konno H."/>
            <person name="Nakano K."/>
            <person name="Ninomiya N."/>
            <person name="Nishio T."/>
            <person name="Okada M."/>
            <person name="Plessy C."/>
            <person name="Shibata K."/>
            <person name="Shiraki T."/>
            <person name="Suzuki S."/>
            <person name="Tagami M."/>
            <person name="Waki K."/>
            <person name="Watahiki A."/>
            <person name="Okamura-Oho Y."/>
            <person name="Suzuki H."/>
            <person name="Kawai J."/>
            <person name="Hayashizaki Y."/>
        </authorList>
    </citation>
    <scope>NUCLEOTIDE SEQUENCE [LARGE SCALE MRNA] (ISOFORM 2)</scope>
    <scope>NUCLEOTIDE SEQUENCE [LARGE SCALE MRNA] OF 363-952 (ISOFORM 1)</scope>
    <source>
        <strain>C57BL/6J</strain>
        <tissue>Eye</tissue>
        <tissue>Lung</tissue>
    </source>
</reference>
<reference key="3">
    <citation type="journal article" date="2005" name="Gene Expr. Patterns">
        <title>Rbm19 is a nucleolar protein expressed in crypt/progenitor cells of the intestinal epithelium.</title>
        <authorList>
            <person name="Lorenzen J.A."/>
            <person name="Bonacci B.B."/>
            <person name="Palmer R.E."/>
            <person name="Wells C."/>
            <person name="Zhang J."/>
            <person name="Haber D.A."/>
            <person name="Goldstein A.M."/>
            <person name="Mayer A.N."/>
        </authorList>
    </citation>
    <scope>SUBCELLULAR LOCATION</scope>
    <scope>DEVELOPMENTAL STAGE</scope>
    <scope>TISSUE SPECIFICITY</scope>
</reference>
<reference key="4">
    <citation type="journal article" date="2007" name="Proc. Natl. Acad. Sci. U.S.A.">
        <title>Large-scale phosphorylation analysis of mouse liver.</title>
        <authorList>
            <person name="Villen J."/>
            <person name="Beausoleil S.A."/>
            <person name="Gerber S.A."/>
            <person name="Gygi S.P."/>
        </authorList>
    </citation>
    <scope>PHOSPHORYLATION [LARGE SCALE ANALYSIS] AT SER-693</scope>
    <scope>IDENTIFICATION BY MASS SPECTROMETRY [LARGE SCALE ANALYSIS]</scope>
    <source>
        <tissue>Liver</tissue>
    </source>
</reference>
<reference key="5">
    <citation type="journal article" date="2008" name="BMC Dev. Biol.">
        <title>RBM19 is essential for preimplantation development in the mouse.</title>
        <authorList>
            <person name="Zhang J."/>
            <person name="Tomasini A.J."/>
            <person name="Mayer A.N."/>
        </authorList>
    </citation>
    <scope>SUBCELLULAR LOCATION</scope>
    <scope>DISRUPTION PHENOTYPE</scope>
    <scope>FUNCTION</scope>
</reference>
<reference key="6">
    <citation type="journal article" date="2009" name="Immunity">
        <title>The phagosomal proteome in interferon-gamma-activated macrophages.</title>
        <authorList>
            <person name="Trost M."/>
            <person name="English L."/>
            <person name="Lemieux S."/>
            <person name="Courcelles M."/>
            <person name="Desjardins M."/>
            <person name="Thibault P."/>
        </authorList>
    </citation>
    <scope>PHOSPHORYLATION [LARGE SCALE ANALYSIS] AT SER-944</scope>
    <scope>IDENTIFICATION BY MASS SPECTROMETRY [LARGE SCALE ANALYSIS]</scope>
</reference>
<reference key="7">
    <citation type="journal article" date="2010" name="Cell">
        <title>A tissue-specific atlas of mouse protein phosphorylation and expression.</title>
        <authorList>
            <person name="Huttlin E.L."/>
            <person name="Jedrychowski M.P."/>
            <person name="Elias J.E."/>
            <person name="Goswami T."/>
            <person name="Rad R."/>
            <person name="Beausoleil S.A."/>
            <person name="Villen J."/>
            <person name="Haas W."/>
            <person name="Sowa M.E."/>
            <person name="Gygi S.P."/>
        </authorList>
    </citation>
    <scope>IDENTIFICATION BY MASS SPECTROMETRY [LARGE SCALE ANALYSIS]</scope>
    <source>
        <tissue>Pancreas</tissue>
    </source>
</reference>
<reference key="8">
    <citation type="submission" date="2004-11" db="PDB data bank">
        <title>Solution structure of the second RNA binding domain from hypothetical protein BAB23448.</title>
        <authorList>
            <consortium name="RIKEN structural genomics initiative (RSGI)"/>
        </authorList>
    </citation>
    <scope>STRUCTURE BY NMR OF 581-678</scope>
</reference>
<comment type="function">
    <text evidence="6">Plays a role in embryo pre-implantation development.</text>
</comment>
<comment type="subcellular location">
    <subcellularLocation>
        <location>Nucleus</location>
        <location>Nucleolus</location>
    </subcellularLocation>
    <subcellularLocation>
        <location>Nucleus</location>
        <location>Nucleoplasm</location>
    </subcellularLocation>
    <subcellularLocation>
        <location>Cytoplasm</location>
    </subcellularLocation>
    <subcellularLocation>
        <location>Chromosome</location>
    </subcellularLocation>
    <text evidence="1">Colocalizes with NPM1 during interphase. By late prophase, metaphase, anaphase and telophase, associates with the chromosome periphery. By telophase localizes to nucleolar precursor body (NPB) (By similarity). In discrete foci distributed throughout the cytoplasm and nucleoplasm during the 4 to 8 cell stages and the morula stage, but not in the periphery of the NPB. During blastocyst development, becomes increasingly localized to the nucleolus and less to the cytoplasm. At the late blastocyst stage, localized predominantly in the nucleolus. Localized in the nucleolus during interphase and to the perichromosomal sheath during mitosis. Does not colocalize in the cytoplasm with GW182 in P-bodies. May translocate to the nucleolus upon early embryonic development.</text>
</comment>
<comment type="alternative products">
    <event type="alternative splicing"/>
    <isoform>
        <id>Q8R3C6-1</id>
        <name>1</name>
        <sequence type="displayed"/>
    </isoform>
    <isoform>
        <id>Q8R3C6-2</id>
        <name>2</name>
        <sequence type="described" ref="VSP_015005 VSP_015006"/>
    </isoform>
</comment>
<comment type="tissue specificity">
    <text evidence="5">Expressed in the crypts of Lieberkuhn of the intestine (at protein level).</text>
</comment>
<comment type="developmental stage">
    <text evidence="5">Expressed during early development. Expressed in the epithelium of the embryonic gut tube (at protein level).</text>
</comment>
<comment type="disruption phenotype">
    <text evidence="6">Arrests embryonic development prior to implantation. Embryos at 3.5 dpc lack the mature, tripartite nucleoli, but instead, contain spheres resembling nucleolar precursor body (NPB), indicating arrest of nucleologenesis.</text>
</comment>
<comment type="similarity">
    <text evidence="8">Belongs to the RRM MRD1 family.</text>
</comment>
<name>RBM19_MOUSE</name>
<organism>
    <name type="scientific">Mus musculus</name>
    <name type="common">Mouse</name>
    <dbReference type="NCBI Taxonomy" id="10090"/>
    <lineage>
        <taxon>Eukaryota</taxon>
        <taxon>Metazoa</taxon>
        <taxon>Chordata</taxon>
        <taxon>Craniata</taxon>
        <taxon>Vertebrata</taxon>
        <taxon>Euteleostomi</taxon>
        <taxon>Mammalia</taxon>
        <taxon>Eutheria</taxon>
        <taxon>Euarchontoglires</taxon>
        <taxon>Glires</taxon>
        <taxon>Rodentia</taxon>
        <taxon>Myomorpha</taxon>
        <taxon>Muroidea</taxon>
        <taxon>Muridae</taxon>
        <taxon>Murinae</taxon>
        <taxon>Mus</taxon>
        <taxon>Mus</taxon>
    </lineage>
</organism>
<protein>
    <recommendedName>
        <fullName>Probable RNA-binding protein 19</fullName>
    </recommendedName>
    <alternativeName>
        <fullName>RNA-binding motif protein 19</fullName>
    </alternativeName>
</protein>
<proteinExistence type="evidence at protein level"/>
<dbReference type="EMBL" id="BC025619">
    <property type="protein sequence ID" value="AAH25619.1"/>
    <property type="molecule type" value="mRNA"/>
</dbReference>
<dbReference type="EMBL" id="BC034010">
    <property type="protein sequence ID" value="AAH34010.1"/>
    <property type="molecule type" value="mRNA"/>
</dbReference>
<dbReference type="EMBL" id="AK004657">
    <property type="protein sequence ID" value="BAB23448.1"/>
    <property type="molecule type" value="mRNA"/>
</dbReference>
<dbReference type="EMBL" id="AK053511">
    <property type="protein sequence ID" value="BAC35411.1"/>
    <property type="molecule type" value="mRNA"/>
</dbReference>
<dbReference type="CCDS" id="CCDS19616.1">
    <molecule id="Q8R3C6-1"/>
</dbReference>
<dbReference type="RefSeq" id="NP_083038.1">
    <molecule id="Q8R3C6-1"/>
    <property type="nucleotide sequence ID" value="NM_028762.1"/>
</dbReference>
<dbReference type="PDB" id="1WHW">
    <property type="method" value="NMR"/>
    <property type="chains" value="A=399-484"/>
</dbReference>
<dbReference type="PDB" id="1WHX">
    <property type="method" value="NMR"/>
    <property type="chains" value="A=581-678"/>
</dbReference>
<dbReference type="PDB" id="2CPF">
    <property type="method" value="NMR"/>
    <property type="chains" value="A=724-808"/>
</dbReference>
<dbReference type="PDB" id="2CPH">
    <property type="method" value="NMR"/>
    <property type="chains" value="A=816-909"/>
</dbReference>
<dbReference type="PDBsum" id="1WHW"/>
<dbReference type="PDBsum" id="1WHX"/>
<dbReference type="PDBsum" id="2CPF"/>
<dbReference type="PDBsum" id="2CPH"/>
<dbReference type="SMR" id="Q8R3C6"/>
<dbReference type="BioGRID" id="216500">
    <property type="interactions" value="4"/>
</dbReference>
<dbReference type="FunCoup" id="Q8R3C6">
    <property type="interactions" value="4123"/>
</dbReference>
<dbReference type="STRING" id="10090.ENSMUSP00000031590"/>
<dbReference type="GlyGen" id="Q8R3C6">
    <property type="glycosylation" value="1 site, 1 O-linked glycan (1 site)"/>
</dbReference>
<dbReference type="iPTMnet" id="Q8R3C6"/>
<dbReference type="PhosphoSitePlus" id="Q8R3C6"/>
<dbReference type="PaxDb" id="10090-ENSMUSP00000031590"/>
<dbReference type="PeptideAtlas" id="Q8R3C6"/>
<dbReference type="ProteomicsDB" id="255121">
    <molecule id="Q8R3C6-1"/>
</dbReference>
<dbReference type="ProteomicsDB" id="255122">
    <molecule id="Q8R3C6-2"/>
</dbReference>
<dbReference type="Pumba" id="Q8R3C6"/>
<dbReference type="Antibodypedia" id="31281">
    <property type="antibodies" value="54 antibodies from 17 providers"/>
</dbReference>
<dbReference type="DNASU" id="74111"/>
<dbReference type="Ensembl" id="ENSMUST00000031590.12">
    <molecule id="Q8R3C6-1"/>
    <property type="protein sequence ID" value="ENSMUSP00000031590.9"/>
    <property type="gene ID" value="ENSMUSG00000029594.13"/>
</dbReference>
<dbReference type="GeneID" id="74111"/>
<dbReference type="KEGG" id="mmu:74111"/>
<dbReference type="UCSC" id="uc008zha.1">
    <molecule id="Q8R3C6-1"/>
    <property type="organism name" value="mouse"/>
</dbReference>
<dbReference type="AGR" id="MGI:1921361"/>
<dbReference type="CTD" id="9904"/>
<dbReference type="MGI" id="MGI:1921361">
    <property type="gene designation" value="Rbm19"/>
</dbReference>
<dbReference type="VEuPathDB" id="HostDB:ENSMUSG00000029594"/>
<dbReference type="eggNOG" id="KOG0110">
    <property type="taxonomic scope" value="Eukaryota"/>
</dbReference>
<dbReference type="GeneTree" id="ENSGT00840000129953"/>
<dbReference type="HOGENOM" id="CLU_008479_1_0_1"/>
<dbReference type="InParanoid" id="Q8R3C6"/>
<dbReference type="OMA" id="FNNTCIQ"/>
<dbReference type="OrthoDB" id="439639at2759"/>
<dbReference type="PhylomeDB" id="Q8R3C6"/>
<dbReference type="TreeFam" id="TF105725"/>
<dbReference type="BioGRID-ORCS" id="74111">
    <property type="hits" value="24 hits in 79 CRISPR screens"/>
</dbReference>
<dbReference type="ChiTaRS" id="Rbm19">
    <property type="organism name" value="mouse"/>
</dbReference>
<dbReference type="EvolutionaryTrace" id="Q8R3C6"/>
<dbReference type="PRO" id="PR:Q8R3C6"/>
<dbReference type="Proteomes" id="UP000000589">
    <property type="component" value="Chromosome 5"/>
</dbReference>
<dbReference type="RNAct" id="Q8R3C6">
    <property type="molecule type" value="protein"/>
</dbReference>
<dbReference type="Bgee" id="ENSMUSG00000029594">
    <property type="expression patterns" value="Expressed in ectoplacental cone and 222 other cell types or tissues"/>
</dbReference>
<dbReference type="ExpressionAtlas" id="Q8R3C6">
    <property type="expression patterns" value="baseline and differential"/>
</dbReference>
<dbReference type="GO" id="GO:0005694">
    <property type="term" value="C:chromosome"/>
    <property type="evidence" value="ECO:0007669"/>
    <property type="project" value="UniProtKB-SubCell"/>
</dbReference>
<dbReference type="GO" id="GO:0005737">
    <property type="term" value="C:cytoplasm"/>
    <property type="evidence" value="ECO:0000314"/>
    <property type="project" value="UniProtKB"/>
</dbReference>
<dbReference type="GO" id="GO:0005730">
    <property type="term" value="C:nucleolus"/>
    <property type="evidence" value="ECO:0000314"/>
    <property type="project" value="UniProtKB"/>
</dbReference>
<dbReference type="GO" id="GO:0005654">
    <property type="term" value="C:nucleoplasm"/>
    <property type="evidence" value="ECO:0000314"/>
    <property type="project" value="UniProtKB"/>
</dbReference>
<dbReference type="GO" id="GO:0003723">
    <property type="term" value="F:RNA binding"/>
    <property type="evidence" value="ECO:0007669"/>
    <property type="project" value="UniProtKB-KW"/>
</dbReference>
<dbReference type="GO" id="GO:0040019">
    <property type="term" value="P:positive regulation of embryonic development"/>
    <property type="evidence" value="ECO:0000315"/>
    <property type="project" value="UniProtKB"/>
</dbReference>
<dbReference type="CDD" id="cd12564">
    <property type="entry name" value="RRM1_RBM19"/>
    <property type="match status" value="1"/>
</dbReference>
<dbReference type="CDD" id="cd12502">
    <property type="entry name" value="RRM2_RMB19"/>
    <property type="match status" value="1"/>
</dbReference>
<dbReference type="CDD" id="cd12567">
    <property type="entry name" value="RRM3_RBM19"/>
    <property type="match status" value="1"/>
</dbReference>
<dbReference type="CDD" id="cd12569">
    <property type="entry name" value="RRM4_RBM19"/>
    <property type="match status" value="1"/>
</dbReference>
<dbReference type="CDD" id="cd12318">
    <property type="entry name" value="RRM5_RBM19_like"/>
    <property type="match status" value="1"/>
</dbReference>
<dbReference type="CDD" id="cd12571">
    <property type="entry name" value="RRM6_RBM19"/>
    <property type="match status" value="1"/>
</dbReference>
<dbReference type="FunFam" id="3.30.70.330:FF:000240">
    <property type="entry name" value="RNA binding motif protein 19"/>
    <property type="match status" value="1"/>
</dbReference>
<dbReference type="FunFam" id="3.30.70.330:FF:000277">
    <property type="entry name" value="RNA binding motif protein 19"/>
    <property type="match status" value="1"/>
</dbReference>
<dbReference type="FunFam" id="3.30.70.330:FF:000296">
    <property type="entry name" value="RNA binding motif protein 19"/>
    <property type="match status" value="1"/>
</dbReference>
<dbReference type="FunFam" id="3.30.70.330:FF:000297">
    <property type="entry name" value="RNA binding motif protein 19"/>
    <property type="match status" value="1"/>
</dbReference>
<dbReference type="FunFam" id="3.30.70.330:FF:000387">
    <property type="entry name" value="RNA binding motif protein 19"/>
    <property type="match status" value="1"/>
</dbReference>
<dbReference type="FunFam" id="3.30.70.330:FF:000389">
    <property type="entry name" value="RNA binding motif protein 19"/>
    <property type="match status" value="1"/>
</dbReference>
<dbReference type="Gene3D" id="3.30.70.330">
    <property type="match status" value="6"/>
</dbReference>
<dbReference type="InterPro" id="IPR012677">
    <property type="entry name" value="Nucleotide-bd_a/b_plait_sf"/>
</dbReference>
<dbReference type="InterPro" id="IPR035979">
    <property type="entry name" value="RBD_domain_sf"/>
</dbReference>
<dbReference type="InterPro" id="IPR034419">
    <property type="entry name" value="RBM19_RRM3"/>
</dbReference>
<dbReference type="InterPro" id="IPR034420">
    <property type="entry name" value="RBM19_RRM4"/>
</dbReference>
<dbReference type="InterPro" id="IPR034423">
    <property type="entry name" value="RBM19_RRM5"/>
</dbReference>
<dbReference type="InterPro" id="IPR034421">
    <property type="entry name" value="RBM19_RRM6"/>
</dbReference>
<dbReference type="InterPro" id="IPR034418">
    <property type="entry name" value="RMB19_RRM1"/>
</dbReference>
<dbReference type="InterPro" id="IPR034417">
    <property type="entry name" value="RMB19_RRM2"/>
</dbReference>
<dbReference type="InterPro" id="IPR000504">
    <property type="entry name" value="RRM_dom"/>
</dbReference>
<dbReference type="InterPro" id="IPR003954">
    <property type="entry name" value="RRM_dom_euk"/>
</dbReference>
<dbReference type="InterPro" id="IPR051945">
    <property type="entry name" value="RRM_MRD1_RNA_proc_ribogen"/>
</dbReference>
<dbReference type="PANTHER" id="PTHR48039">
    <property type="entry name" value="RNA-BINDING MOTIF PROTEIN 14B"/>
    <property type="match status" value="1"/>
</dbReference>
<dbReference type="PANTHER" id="PTHR48039:SF5">
    <property type="entry name" value="RNA-BINDING PROTEIN 28"/>
    <property type="match status" value="1"/>
</dbReference>
<dbReference type="Pfam" id="PF00076">
    <property type="entry name" value="RRM_1"/>
    <property type="match status" value="5"/>
</dbReference>
<dbReference type="SMART" id="SM00360">
    <property type="entry name" value="RRM"/>
    <property type="match status" value="6"/>
</dbReference>
<dbReference type="SMART" id="SM00361">
    <property type="entry name" value="RRM_1"/>
    <property type="match status" value="2"/>
</dbReference>
<dbReference type="SUPFAM" id="SSF54928">
    <property type="entry name" value="RNA-binding domain, RBD"/>
    <property type="match status" value="5"/>
</dbReference>
<dbReference type="PROSITE" id="PS50102">
    <property type="entry name" value="RRM"/>
    <property type="match status" value="6"/>
</dbReference>
<keyword id="KW-0002">3D-structure</keyword>
<keyword id="KW-0025">Alternative splicing</keyword>
<keyword id="KW-0158">Chromosome</keyword>
<keyword id="KW-0963">Cytoplasm</keyword>
<keyword id="KW-0217">Developmental protein</keyword>
<keyword id="KW-1017">Isopeptide bond</keyword>
<keyword id="KW-0539">Nucleus</keyword>
<keyword id="KW-0597">Phosphoprotein</keyword>
<keyword id="KW-1185">Reference proteome</keyword>
<keyword id="KW-0677">Repeat</keyword>
<keyword id="KW-0694">RNA-binding</keyword>
<keyword id="KW-0832">Ubl conjugation</keyword>
<feature type="chain" id="PRO_0000081782" description="Probable RNA-binding protein 19">
    <location>
        <begin position="1"/>
        <end position="952"/>
    </location>
</feature>
<feature type="domain" description="RRM 1" evidence="3">
    <location>
        <begin position="2"/>
        <end position="79"/>
    </location>
</feature>
<feature type="domain" description="RRM 2" evidence="3">
    <location>
        <begin position="293"/>
        <end position="368"/>
    </location>
</feature>
<feature type="domain" description="RRM 3" evidence="3">
    <location>
        <begin position="400"/>
        <end position="478"/>
    </location>
</feature>
<feature type="domain" description="RRM 4" evidence="3">
    <location>
        <begin position="584"/>
        <end position="656"/>
    </location>
</feature>
<feature type="domain" description="RRM 5" evidence="3">
    <location>
        <begin position="722"/>
        <end position="803"/>
    </location>
</feature>
<feature type="domain" description="RRM 6" evidence="3">
    <location>
        <begin position="824"/>
        <end position="904"/>
    </location>
</feature>
<feature type="region of interest" description="Disordered" evidence="4">
    <location>
        <begin position="85"/>
        <end position="126"/>
    </location>
</feature>
<feature type="region of interest" description="Disordered" evidence="4">
    <location>
        <begin position="159"/>
        <end position="267"/>
    </location>
</feature>
<feature type="region of interest" description="Disordered" evidence="4">
    <location>
        <begin position="367"/>
        <end position="395"/>
    </location>
</feature>
<feature type="region of interest" description="Disordered" evidence="4">
    <location>
        <begin position="481"/>
        <end position="504"/>
    </location>
</feature>
<feature type="region of interest" description="Disordered" evidence="4">
    <location>
        <begin position="664"/>
        <end position="719"/>
    </location>
</feature>
<feature type="compositionally biased region" description="Low complexity" evidence="4">
    <location>
        <begin position="95"/>
        <end position="109"/>
    </location>
</feature>
<feature type="compositionally biased region" description="Polar residues" evidence="4">
    <location>
        <begin position="163"/>
        <end position="180"/>
    </location>
</feature>
<feature type="compositionally biased region" description="Acidic residues" evidence="4">
    <location>
        <begin position="181"/>
        <end position="196"/>
    </location>
</feature>
<feature type="compositionally biased region" description="Acidic residues" evidence="4">
    <location>
        <begin position="224"/>
        <end position="251"/>
    </location>
</feature>
<feature type="compositionally biased region" description="Basic and acidic residues" evidence="4">
    <location>
        <begin position="664"/>
        <end position="679"/>
    </location>
</feature>
<feature type="compositionally biased region" description="Acidic residues" evidence="4">
    <location>
        <begin position="705"/>
        <end position="718"/>
    </location>
</feature>
<feature type="modified residue" description="Phosphoserine" evidence="2">
    <location>
        <position position="177"/>
    </location>
</feature>
<feature type="modified residue" description="Phosphoserine" evidence="2">
    <location>
        <position position="179"/>
    </location>
</feature>
<feature type="modified residue" description="Phosphoserine" evidence="2">
    <location>
        <position position="183"/>
    </location>
</feature>
<feature type="modified residue" description="Phosphoserine" evidence="9">
    <location>
        <position position="693"/>
    </location>
</feature>
<feature type="modified residue" description="Phosphoserine" evidence="2">
    <location>
        <position position="928"/>
    </location>
</feature>
<feature type="modified residue" description="Phosphoserine" evidence="10">
    <location>
        <position position="944"/>
    </location>
</feature>
<feature type="cross-link" description="Glycyl lysine isopeptide (Lys-Gly) (interchain with G-Cter in SUMO2)" evidence="2">
    <location>
        <position position="479"/>
    </location>
</feature>
<feature type="splice variant" id="VSP_015005" description="In isoform 2." evidence="7">
    <original>EANAPGSSYKKKKEAMDKANSSSSHNWNTLFMGPNAV</original>
    <variation>APAALSPPQQDCWPVDRAGDSTSSSGPLPCPCDAARF</variation>
    <location>
        <begin position="485"/>
        <end position="521"/>
    </location>
</feature>
<feature type="splice variant" id="VSP_015006" description="In isoform 2." evidence="7">
    <location>
        <begin position="522"/>
        <end position="952"/>
    </location>
</feature>
<feature type="strand" evidence="11">
    <location>
        <begin position="400"/>
        <end position="405"/>
    </location>
</feature>
<feature type="helix" evidence="11">
    <location>
        <begin position="413"/>
        <end position="421"/>
    </location>
</feature>
<feature type="strand" evidence="11">
    <location>
        <begin position="426"/>
        <end position="430"/>
    </location>
</feature>
<feature type="turn" evidence="11">
    <location>
        <begin position="435"/>
        <end position="437"/>
    </location>
</feature>
<feature type="strand" evidence="11">
    <location>
        <begin position="442"/>
        <end position="450"/>
    </location>
</feature>
<feature type="helix" evidence="11">
    <location>
        <begin position="451"/>
        <end position="460"/>
    </location>
</feature>
<feature type="turn" evidence="11">
    <location>
        <begin position="461"/>
        <end position="463"/>
    </location>
</feature>
<feature type="strand" evidence="11">
    <location>
        <begin position="464"/>
        <end position="468"/>
    </location>
</feature>
<feature type="strand" evidence="11">
    <location>
        <begin position="470"/>
        <end position="475"/>
    </location>
</feature>
<feature type="strand" evidence="12">
    <location>
        <begin position="581"/>
        <end position="590"/>
    </location>
</feature>
<feature type="helix" evidence="12">
    <location>
        <begin position="597"/>
        <end position="605"/>
    </location>
</feature>
<feature type="strand" evidence="12">
    <location>
        <begin position="610"/>
        <end position="614"/>
    </location>
</feature>
<feature type="strand" evidence="12">
    <location>
        <begin position="617"/>
        <end position="620"/>
    </location>
</feature>
<feature type="strand" evidence="12">
    <location>
        <begin position="622"/>
        <end position="627"/>
    </location>
</feature>
<feature type="helix" evidence="12">
    <location>
        <begin position="629"/>
        <end position="639"/>
    </location>
</feature>
<feature type="strand" evidence="12">
    <location>
        <begin position="643"/>
        <end position="648"/>
    </location>
</feature>
<feature type="strand" evidence="12">
    <location>
        <begin position="650"/>
        <end position="655"/>
    </location>
</feature>
<feature type="turn" evidence="12">
    <location>
        <begin position="656"/>
        <end position="659"/>
    </location>
</feature>
<feature type="helix" evidence="12">
    <location>
        <begin position="666"/>
        <end position="670"/>
    </location>
</feature>
<feature type="helix" evidence="12">
    <location>
        <begin position="675"/>
        <end position="677"/>
    </location>
</feature>
<feature type="strand" evidence="13">
    <location>
        <begin position="724"/>
        <end position="728"/>
    </location>
</feature>
<feature type="helix" evidence="13">
    <location>
        <begin position="735"/>
        <end position="743"/>
    </location>
</feature>
<feature type="strand" evidence="13">
    <location>
        <begin position="748"/>
        <end position="757"/>
    </location>
</feature>
<feature type="strand" evidence="13">
    <location>
        <begin position="763"/>
        <end position="775"/>
    </location>
</feature>
<feature type="helix" evidence="13">
    <location>
        <begin position="776"/>
        <end position="785"/>
    </location>
</feature>
<feature type="strand" evidence="13">
    <location>
        <begin position="797"/>
        <end position="799"/>
    </location>
</feature>
<feature type="strand" evidence="14">
    <location>
        <begin position="826"/>
        <end position="830"/>
    </location>
</feature>
<feature type="helix" evidence="14">
    <location>
        <begin position="837"/>
        <end position="845"/>
    </location>
</feature>
<feature type="strand" evidence="14">
    <location>
        <begin position="850"/>
        <end position="854"/>
    </location>
</feature>
<feature type="strand" evidence="14">
    <location>
        <begin position="860"/>
        <end position="862"/>
    </location>
</feature>
<feature type="strand" evidence="14">
    <location>
        <begin position="867"/>
        <end position="875"/>
    </location>
</feature>
<feature type="helix" evidence="14">
    <location>
        <begin position="876"/>
        <end position="887"/>
    </location>
</feature>
<feature type="strand" evidence="14">
    <location>
        <begin position="891"/>
        <end position="894"/>
    </location>
</feature>
<feature type="strand" evidence="14">
    <location>
        <begin position="898"/>
        <end position="901"/>
    </location>
</feature>